<dbReference type="EC" id="4.2.1.9" evidence="1"/>
<dbReference type="EMBL" id="CP000468">
    <property type="protein sequence ID" value="ABJ03233.1"/>
    <property type="molecule type" value="Genomic_DNA"/>
</dbReference>
<dbReference type="RefSeq" id="WP_001127371.1">
    <property type="nucleotide sequence ID" value="NZ_CADILS010000046.1"/>
</dbReference>
<dbReference type="SMR" id="A1AHU3"/>
<dbReference type="KEGG" id="ecv:APECO1_2700"/>
<dbReference type="HOGENOM" id="CLU_014271_4_2_6"/>
<dbReference type="UniPathway" id="UPA00047">
    <property type="reaction ID" value="UER00057"/>
</dbReference>
<dbReference type="UniPathway" id="UPA00049">
    <property type="reaction ID" value="UER00061"/>
</dbReference>
<dbReference type="Proteomes" id="UP000008216">
    <property type="component" value="Chromosome"/>
</dbReference>
<dbReference type="GO" id="GO:0005829">
    <property type="term" value="C:cytosol"/>
    <property type="evidence" value="ECO:0007669"/>
    <property type="project" value="TreeGrafter"/>
</dbReference>
<dbReference type="GO" id="GO:0051537">
    <property type="term" value="F:2 iron, 2 sulfur cluster binding"/>
    <property type="evidence" value="ECO:0007669"/>
    <property type="project" value="UniProtKB-UniRule"/>
</dbReference>
<dbReference type="GO" id="GO:0004160">
    <property type="term" value="F:dihydroxy-acid dehydratase activity"/>
    <property type="evidence" value="ECO:0007669"/>
    <property type="project" value="UniProtKB-UniRule"/>
</dbReference>
<dbReference type="GO" id="GO:0000287">
    <property type="term" value="F:magnesium ion binding"/>
    <property type="evidence" value="ECO:0007669"/>
    <property type="project" value="UniProtKB-UniRule"/>
</dbReference>
<dbReference type="GO" id="GO:0009097">
    <property type="term" value="P:isoleucine biosynthetic process"/>
    <property type="evidence" value="ECO:0007669"/>
    <property type="project" value="UniProtKB-UniRule"/>
</dbReference>
<dbReference type="GO" id="GO:0009099">
    <property type="term" value="P:L-valine biosynthetic process"/>
    <property type="evidence" value="ECO:0007669"/>
    <property type="project" value="UniProtKB-UniRule"/>
</dbReference>
<dbReference type="FunFam" id="3.50.30.80:FF:000001">
    <property type="entry name" value="Dihydroxy-acid dehydratase"/>
    <property type="match status" value="1"/>
</dbReference>
<dbReference type="Gene3D" id="3.50.30.80">
    <property type="entry name" value="IlvD/EDD C-terminal domain-like"/>
    <property type="match status" value="1"/>
</dbReference>
<dbReference type="HAMAP" id="MF_00012">
    <property type="entry name" value="IlvD"/>
    <property type="match status" value="1"/>
</dbReference>
<dbReference type="InterPro" id="IPR042096">
    <property type="entry name" value="Dihydro-acid_dehy_C"/>
</dbReference>
<dbReference type="InterPro" id="IPR004404">
    <property type="entry name" value="DihydroxyA_deHydtase"/>
</dbReference>
<dbReference type="InterPro" id="IPR020558">
    <property type="entry name" value="DiOHA_6PGluconate_deHydtase_CS"/>
</dbReference>
<dbReference type="InterPro" id="IPR056740">
    <property type="entry name" value="ILV_EDD_C"/>
</dbReference>
<dbReference type="InterPro" id="IPR000581">
    <property type="entry name" value="ILV_EDD_N"/>
</dbReference>
<dbReference type="InterPro" id="IPR037237">
    <property type="entry name" value="IlvD/EDD_N"/>
</dbReference>
<dbReference type="NCBIfam" id="TIGR00110">
    <property type="entry name" value="ilvD"/>
    <property type="match status" value="1"/>
</dbReference>
<dbReference type="NCBIfam" id="NF009103">
    <property type="entry name" value="PRK12448.1"/>
    <property type="match status" value="1"/>
</dbReference>
<dbReference type="PANTHER" id="PTHR43661">
    <property type="entry name" value="D-XYLONATE DEHYDRATASE"/>
    <property type="match status" value="1"/>
</dbReference>
<dbReference type="PANTHER" id="PTHR43661:SF3">
    <property type="entry name" value="D-XYLONATE DEHYDRATASE YAGF-RELATED"/>
    <property type="match status" value="1"/>
</dbReference>
<dbReference type="Pfam" id="PF24877">
    <property type="entry name" value="ILV_EDD_C"/>
    <property type="match status" value="1"/>
</dbReference>
<dbReference type="Pfam" id="PF00920">
    <property type="entry name" value="ILVD_EDD_N"/>
    <property type="match status" value="1"/>
</dbReference>
<dbReference type="SUPFAM" id="SSF143975">
    <property type="entry name" value="IlvD/EDD N-terminal domain-like"/>
    <property type="match status" value="1"/>
</dbReference>
<dbReference type="SUPFAM" id="SSF52016">
    <property type="entry name" value="LeuD/IlvD-like"/>
    <property type="match status" value="1"/>
</dbReference>
<dbReference type="PROSITE" id="PS00886">
    <property type="entry name" value="ILVD_EDD_1"/>
    <property type="match status" value="1"/>
</dbReference>
<dbReference type="PROSITE" id="PS00887">
    <property type="entry name" value="ILVD_EDD_2"/>
    <property type="match status" value="1"/>
</dbReference>
<name>ILVD_ECOK1</name>
<proteinExistence type="inferred from homology"/>
<protein>
    <recommendedName>
        <fullName evidence="1">Dihydroxy-acid dehydratase</fullName>
        <shortName evidence="1">DAD</shortName>
        <ecNumber evidence="1">4.2.1.9</ecNumber>
    </recommendedName>
</protein>
<organism>
    <name type="scientific">Escherichia coli O1:K1 / APEC</name>
    <dbReference type="NCBI Taxonomy" id="405955"/>
    <lineage>
        <taxon>Bacteria</taxon>
        <taxon>Pseudomonadati</taxon>
        <taxon>Pseudomonadota</taxon>
        <taxon>Gammaproteobacteria</taxon>
        <taxon>Enterobacterales</taxon>
        <taxon>Enterobacteriaceae</taxon>
        <taxon>Escherichia</taxon>
    </lineage>
</organism>
<sequence length="616" mass="65545">MPKYRSATTTHGRNMAGARALWRATGMTDADFGKPIIAVVNSFTQFVPGHVHLRDLGKLVAEQIEAAGGVAKEFNTIAVDDGIAMGHGGMLYSLPSRELIADSVEYMVNAHCADAMVCISNCDKITPGMLMASLRLNIPVIFVSGGPMEAGKTKLSDQIIKLDLVDAMIQGADPKVSDSQSDQVERSACPTCGSCSGMFTANSMNCLTEALGLSQPGNGSLLATHADRKQLFLNAGKRIVELTKRYYEQDDESALPRNIASKAAFENAMTLDIAMGGSTNTVLHLLAAAQEAEIDFTMSDIDKLSRKVPQLCKVAPSTQKYHMEDVHRAGGVIGILGELDRAGLLNRDVKNVLGLTLPQTLEQYDIIVTQDDAVKNMFRAGPAGIRTTQAFSQDCRWDTLDDDRSNGCIRSLEHAYSKDGGLAVLYGNFAENGCIVKTAGVDDSILKFTGPAKVYESQDDAVEAILGGKVVAGDVVVIRYEGPKGGPGMQEMLYPTSFLKSMGLGKACALITDGRFSGGTSGLSIGHVSPEAASGGSIGLIEDGDLIAIDIPNRGIQLQVSDAELAARREAQEARGDKAWTPKNRERQVSFALRAYASLATSADKGAVRDKSKLGG</sequence>
<gene>
    <name evidence="1" type="primary">ilvD</name>
    <name type="ordered locus">Ecok1_37390</name>
    <name type="ORF">APECO1_2700</name>
</gene>
<comment type="function">
    <text evidence="1">Functions in the biosynthesis of branched-chain amino acids. Catalyzes the dehydration of (2R,3R)-2,3-dihydroxy-3-methylpentanoate (2,3-dihydroxy-3-methylvalerate) into 2-oxo-3-methylpentanoate (2-oxo-3-methylvalerate) and of (2R)-2,3-dihydroxy-3-methylbutanoate (2,3-dihydroxyisovalerate) into 2-oxo-3-methylbutanoate (2-oxoisovalerate), the penultimate precursor to L-isoleucine and L-valine, respectively.</text>
</comment>
<comment type="catalytic activity">
    <reaction evidence="1">
        <text>(2R)-2,3-dihydroxy-3-methylbutanoate = 3-methyl-2-oxobutanoate + H2O</text>
        <dbReference type="Rhea" id="RHEA:24809"/>
        <dbReference type="ChEBI" id="CHEBI:11851"/>
        <dbReference type="ChEBI" id="CHEBI:15377"/>
        <dbReference type="ChEBI" id="CHEBI:49072"/>
        <dbReference type="EC" id="4.2.1.9"/>
    </reaction>
    <physiologicalReaction direction="left-to-right" evidence="1">
        <dbReference type="Rhea" id="RHEA:24810"/>
    </physiologicalReaction>
</comment>
<comment type="catalytic activity">
    <reaction evidence="1">
        <text>(2R,3R)-2,3-dihydroxy-3-methylpentanoate = (S)-3-methyl-2-oxopentanoate + H2O</text>
        <dbReference type="Rhea" id="RHEA:27694"/>
        <dbReference type="ChEBI" id="CHEBI:15377"/>
        <dbReference type="ChEBI" id="CHEBI:35146"/>
        <dbReference type="ChEBI" id="CHEBI:49258"/>
        <dbReference type="EC" id="4.2.1.9"/>
    </reaction>
    <physiologicalReaction direction="left-to-right" evidence="1">
        <dbReference type="Rhea" id="RHEA:27695"/>
    </physiologicalReaction>
</comment>
<comment type="cofactor">
    <cofactor evidence="1">
        <name>[2Fe-2S] cluster</name>
        <dbReference type="ChEBI" id="CHEBI:190135"/>
    </cofactor>
    <text evidence="1">Binds 1 [2Fe-2S] cluster per subunit. This cluster acts as a Lewis acid cofactor.</text>
</comment>
<comment type="cofactor">
    <cofactor evidence="1">
        <name>Mg(2+)</name>
        <dbReference type="ChEBI" id="CHEBI:18420"/>
    </cofactor>
</comment>
<comment type="pathway">
    <text evidence="1">Amino-acid biosynthesis; L-isoleucine biosynthesis; L-isoleucine from 2-oxobutanoate: step 3/4.</text>
</comment>
<comment type="pathway">
    <text evidence="1">Amino-acid biosynthesis; L-valine biosynthesis; L-valine from pyruvate: step 3/4.</text>
</comment>
<comment type="subunit">
    <text evidence="1">Homodimer.</text>
</comment>
<comment type="similarity">
    <text evidence="1">Belongs to the IlvD/Edd family.</text>
</comment>
<evidence type="ECO:0000255" key="1">
    <source>
        <dbReference type="HAMAP-Rule" id="MF_00012"/>
    </source>
</evidence>
<accession>A1AHU3</accession>
<reference key="1">
    <citation type="journal article" date="2007" name="J. Bacteriol.">
        <title>The genome sequence of avian pathogenic Escherichia coli strain O1:K1:H7 shares strong similarities with human extraintestinal pathogenic E. coli genomes.</title>
        <authorList>
            <person name="Johnson T.J."/>
            <person name="Kariyawasam S."/>
            <person name="Wannemuehler Y."/>
            <person name="Mangiamele P."/>
            <person name="Johnson S.J."/>
            <person name="Doetkott C."/>
            <person name="Skyberg J.A."/>
            <person name="Lynne A.M."/>
            <person name="Johnson J.R."/>
            <person name="Nolan L.K."/>
        </authorList>
    </citation>
    <scope>NUCLEOTIDE SEQUENCE [LARGE SCALE GENOMIC DNA]</scope>
</reference>
<feature type="chain" id="PRO_1000000980" description="Dihydroxy-acid dehydratase">
    <location>
        <begin position="1"/>
        <end position="616"/>
    </location>
</feature>
<feature type="active site" description="Proton acceptor" evidence="1">
    <location>
        <position position="517"/>
    </location>
</feature>
<feature type="binding site" evidence="1">
    <location>
        <position position="81"/>
    </location>
    <ligand>
        <name>Mg(2+)</name>
        <dbReference type="ChEBI" id="CHEBI:18420"/>
    </ligand>
</feature>
<feature type="binding site" evidence="1">
    <location>
        <position position="122"/>
    </location>
    <ligand>
        <name>[2Fe-2S] cluster</name>
        <dbReference type="ChEBI" id="CHEBI:190135"/>
    </ligand>
</feature>
<feature type="binding site" evidence="1">
    <location>
        <position position="123"/>
    </location>
    <ligand>
        <name>Mg(2+)</name>
        <dbReference type="ChEBI" id="CHEBI:18420"/>
    </ligand>
</feature>
<feature type="binding site" description="via carbamate group" evidence="1">
    <location>
        <position position="124"/>
    </location>
    <ligand>
        <name>Mg(2+)</name>
        <dbReference type="ChEBI" id="CHEBI:18420"/>
    </ligand>
</feature>
<feature type="binding site" evidence="1">
    <location>
        <position position="195"/>
    </location>
    <ligand>
        <name>[2Fe-2S] cluster</name>
        <dbReference type="ChEBI" id="CHEBI:190135"/>
    </ligand>
</feature>
<feature type="binding site" evidence="1">
    <location>
        <position position="491"/>
    </location>
    <ligand>
        <name>Mg(2+)</name>
        <dbReference type="ChEBI" id="CHEBI:18420"/>
    </ligand>
</feature>
<feature type="modified residue" description="N6-carboxylysine" evidence="1">
    <location>
        <position position="124"/>
    </location>
</feature>
<keyword id="KW-0001">2Fe-2S</keyword>
<keyword id="KW-0028">Amino-acid biosynthesis</keyword>
<keyword id="KW-0100">Branched-chain amino acid biosynthesis</keyword>
<keyword id="KW-0408">Iron</keyword>
<keyword id="KW-0411">Iron-sulfur</keyword>
<keyword id="KW-0456">Lyase</keyword>
<keyword id="KW-0460">Magnesium</keyword>
<keyword id="KW-0479">Metal-binding</keyword>
<keyword id="KW-1185">Reference proteome</keyword>